<organism>
    <name type="scientific">Pseudomonas putida (strain ATCC 47054 / DSM 6125 / CFBP 8728 / NCIMB 11950 / KT2440)</name>
    <dbReference type="NCBI Taxonomy" id="160488"/>
    <lineage>
        <taxon>Bacteria</taxon>
        <taxon>Pseudomonadati</taxon>
        <taxon>Pseudomonadota</taxon>
        <taxon>Gammaproteobacteria</taxon>
        <taxon>Pseudomonadales</taxon>
        <taxon>Pseudomonadaceae</taxon>
        <taxon>Pseudomonas</taxon>
    </lineage>
</organism>
<evidence type="ECO:0000255" key="1">
    <source>
        <dbReference type="HAMAP-Rule" id="MF_00093"/>
    </source>
</evidence>
<accession>Q88PW5</accession>
<protein>
    <recommendedName>
        <fullName evidence="1">Peptide chain release factor 1</fullName>
        <shortName evidence="1">RF-1</shortName>
    </recommendedName>
</protein>
<feature type="chain" id="PRO_0000177724" description="Peptide chain release factor 1">
    <location>
        <begin position="1"/>
        <end position="360"/>
    </location>
</feature>
<feature type="modified residue" description="N5-methylglutamine" evidence="1">
    <location>
        <position position="237"/>
    </location>
</feature>
<proteinExistence type="inferred from homology"/>
<reference key="1">
    <citation type="journal article" date="2002" name="Environ. Microbiol.">
        <title>Complete genome sequence and comparative analysis of the metabolically versatile Pseudomonas putida KT2440.</title>
        <authorList>
            <person name="Nelson K.E."/>
            <person name="Weinel C."/>
            <person name="Paulsen I.T."/>
            <person name="Dodson R.J."/>
            <person name="Hilbert H."/>
            <person name="Martins dos Santos V.A.P."/>
            <person name="Fouts D.E."/>
            <person name="Gill S.R."/>
            <person name="Pop M."/>
            <person name="Holmes M."/>
            <person name="Brinkac L.M."/>
            <person name="Beanan M.J."/>
            <person name="DeBoy R.T."/>
            <person name="Daugherty S.C."/>
            <person name="Kolonay J.F."/>
            <person name="Madupu R."/>
            <person name="Nelson W.C."/>
            <person name="White O."/>
            <person name="Peterson J.D."/>
            <person name="Khouri H.M."/>
            <person name="Hance I."/>
            <person name="Chris Lee P."/>
            <person name="Holtzapple E.K."/>
            <person name="Scanlan D."/>
            <person name="Tran K."/>
            <person name="Moazzez A."/>
            <person name="Utterback T.R."/>
            <person name="Rizzo M."/>
            <person name="Lee K."/>
            <person name="Kosack D."/>
            <person name="Moestl D."/>
            <person name="Wedler H."/>
            <person name="Lauber J."/>
            <person name="Stjepandic D."/>
            <person name="Hoheisel J."/>
            <person name="Straetz M."/>
            <person name="Heim S."/>
            <person name="Kiewitz C."/>
            <person name="Eisen J.A."/>
            <person name="Timmis K.N."/>
            <person name="Duesterhoeft A."/>
            <person name="Tuemmler B."/>
            <person name="Fraser C.M."/>
        </authorList>
    </citation>
    <scope>NUCLEOTIDE SEQUENCE [LARGE SCALE GENOMIC DNA]</scope>
    <source>
        <strain>ATCC 47054 / DSM 6125 / CFBP 8728 / NCIMB 11950 / KT2440</strain>
    </source>
</reference>
<dbReference type="EMBL" id="AE015451">
    <property type="protein sequence ID" value="AAN66358.1"/>
    <property type="molecule type" value="Genomic_DNA"/>
</dbReference>
<dbReference type="RefSeq" id="NP_742894.1">
    <property type="nucleotide sequence ID" value="NC_002947.4"/>
</dbReference>
<dbReference type="RefSeq" id="WP_010951978.1">
    <property type="nucleotide sequence ID" value="NZ_CP169744.1"/>
</dbReference>
<dbReference type="SMR" id="Q88PW5"/>
<dbReference type="STRING" id="160488.PP_0733"/>
<dbReference type="PaxDb" id="160488-PP_0733"/>
<dbReference type="GeneID" id="83678086"/>
<dbReference type="KEGG" id="ppu:PP_0733"/>
<dbReference type="PATRIC" id="fig|160488.4.peg.785"/>
<dbReference type="eggNOG" id="COG0216">
    <property type="taxonomic scope" value="Bacteria"/>
</dbReference>
<dbReference type="HOGENOM" id="CLU_036856_0_1_6"/>
<dbReference type="OrthoDB" id="9806673at2"/>
<dbReference type="PhylomeDB" id="Q88PW5"/>
<dbReference type="BioCyc" id="PPUT160488:G1G01-808-MONOMER"/>
<dbReference type="Proteomes" id="UP000000556">
    <property type="component" value="Chromosome"/>
</dbReference>
<dbReference type="GO" id="GO:0005737">
    <property type="term" value="C:cytoplasm"/>
    <property type="evidence" value="ECO:0007669"/>
    <property type="project" value="UniProtKB-SubCell"/>
</dbReference>
<dbReference type="GO" id="GO:0016149">
    <property type="term" value="F:translation release factor activity, codon specific"/>
    <property type="evidence" value="ECO:0007669"/>
    <property type="project" value="UniProtKB-UniRule"/>
</dbReference>
<dbReference type="FunFam" id="3.30.160.20:FF:000004">
    <property type="entry name" value="Peptide chain release factor 1"/>
    <property type="match status" value="1"/>
</dbReference>
<dbReference type="FunFam" id="3.30.70.1660:FF:000002">
    <property type="entry name" value="Peptide chain release factor 1"/>
    <property type="match status" value="1"/>
</dbReference>
<dbReference type="FunFam" id="3.30.70.1660:FF:000004">
    <property type="entry name" value="Peptide chain release factor 1"/>
    <property type="match status" value="1"/>
</dbReference>
<dbReference type="Gene3D" id="3.30.160.20">
    <property type="match status" value="1"/>
</dbReference>
<dbReference type="Gene3D" id="3.30.70.1660">
    <property type="match status" value="1"/>
</dbReference>
<dbReference type="Gene3D" id="6.10.140.1950">
    <property type="match status" value="1"/>
</dbReference>
<dbReference type="HAMAP" id="MF_00093">
    <property type="entry name" value="Rel_fac_1"/>
    <property type="match status" value="1"/>
</dbReference>
<dbReference type="InterPro" id="IPR005139">
    <property type="entry name" value="PCRF"/>
</dbReference>
<dbReference type="InterPro" id="IPR000352">
    <property type="entry name" value="Pep_chain_release_fac_I"/>
</dbReference>
<dbReference type="InterPro" id="IPR045853">
    <property type="entry name" value="Pep_chain_release_fac_I_sf"/>
</dbReference>
<dbReference type="InterPro" id="IPR050057">
    <property type="entry name" value="Prokaryotic/Mito_RF"/>
</dbReference>
<dbReference type="InterPro" id="IPR004373">
    <property type="entry name" value="RF-1"/>
</dbReference>
<dbReference type="NCBIfam" id="TIGR00019">
    <property type="entry name" value="prfA"/>
    <property type="match status" value="1"/>
</dbReference>
<dbReference type="NCBIfam" id="NF001859">
    <property type="entry name" value="PRK00591.1"/>
    <property type="match status" value="1"/>
</dbReference>
<dbReference type="PANTHER" id="PTHR43804">
    <property type="entry name" value="LD18447P"/>
    <property type="match status" value="1"/>
</dbReference>
<dbReference type="PANTHER" id="PTHR43804:SF7">
    <property type="entry name" value="LD18447P"/>
    <property type="match status" value="1"/>
</dbReference>
<dbReference type="Pfam" id="PF03462">
    <property type="entry name" value="PCRF"/>
    <property type="match status" value="1"/>
</dbReference>
<dbReference type="Pfam" id="PF00472">
    <property type="entry name" value="RF-1"/>
    <property type="match status" value="1"/>
</dbReference>
<dbReference type="SMART" id="SM00937">
    <property type="entry name" value="PCRF"/>
    <property type="match status" value="1"/>
</dbReference>
<dbReference type="SUPFAM" id="SSF75620">
    <property type="entry name" value="Release factor"/>
    <property type="match status" value="1"/>
</dbReference>
<dbReference type="PROSITE" id="PS00745">
    <property type="entry name" value="RF_PROK_I"/>
    <property type="match status" value="1"/>
</dbReference>
<comment type="function">
    <text evidence="1">Peptide chain release factor 1 directs the termination of translation in response to the peptide chain termination codons UAG and UAA.</text>
</comment>
<comment type="subcellular location">
    <subcellularLocation>
        <location evidence="1">Cytoplasm</location>
    </subcellularLocation>
</comment>
<comment type="PTM">
    <text evidence="1">Methylated by PrmC. Methylation increases the termination efficiency of RF1.</text>
</comment>
<comment type="similarity">
    <text evidence="1">Belongs to the prokaryotic/mitochondrial release factor family.</text>
</comment>
<gene>
    <name evidence="1" type="primary">prfA</name>
    <name type="ordered locus">PP_0733</name>
</gene>
<name>RF1_PSEPK</name>
<sequence>MKASLLNKLEILQDRFEELTALLGDAEVISDQTRFRAYSREYAEVEPVYAAYKEWRKVQDDLEGAQALLKDSDPDLREMAVEEVREAKEQLLTLEAQLQRMLLPKDPNDGRNVFLEIRAGTGGDEAAIFSGDLFRMYSRYAEKRGWRLEILSENEGEHGGYKEIIARVEGENVYGKLKFESGAHRVQRVPETESQGRVHTSACTVAVLPEPDEQAAIEINPADLRVDTYRASGAGGQHVNKTDSAIRITHLPTGIVVECQEERSQHKNRARAMSWLSAKLNDMQTSAAQNALASERKLLVGSGDRSERIRTYNYPQGRVTDHRINLTLYSLDDILSGGVDAVIEPLLAEYQADQLAALGD</sequence>
<keyword id="KW-0963">Cytoplasm</keyword>
<keyword id="KW-0488">Methylation</keyword>
<keyword id="KW-0648">Protein biosynthesis</keyword>
<keyword id="KW-1185">Reference proteome</keyword>